<dbReference type="EMBL" id="CP001129">
    <property type="protein sequence ID" value="ACG62109.1"/>
    <property type="molecule type" value="Genomic_DNA"/>
</dbReference>
<dbReference type="RefSeq" id="WP_012515383.1">
    <property type="nucleotide sequence ID" value="NC_011134.1"/>
</dbReference>
<dbReference type="SMR" id="B4U292"/>
<dbReference type="KEGG" id="sez:Sez_0746"/>
<dbReference type="HOGENOM" id="CLU_114306_2_1_9"/>
<dbReference type="Proteomes" id="UP000001873">
    <property type="component" value="Chromosome"/>
</dbReference>
<dbReference type="GO" id="GO:1990904">
    <property type="term" value="C:ribonucleoprotein complex"/>
    <property type="evidence" value="ECO:0007669"/>
    <property type="project" value="UniProtKB-KW"/>
</dbReference>
<dbReference type="GO" id="GO:0005840">
    <property type="term" value="C:ribosome"/>
    <property type="evidence" value="ECO:0007669"/>
    <property type="project" value="UniProtKB-KW"/>
</dbReference>
<dbReference type="GO" id="GO:0003735">
    <property type="term" value="F:structural constituent of ribosome"/>
    <property type="evidence" value="ECO:0007669"/>
    <property type="project" value="InterPro"/>
</dbReference>
<dbReference type="GO" id="GO:0006412">
    <property type="term" value="P:translation"/>
    <property type="evidence" value="ECO:0007669"/>
    <property type="project" value="UniProtKB-UniRule"/>
</dbReference>
<dbReference type="Gene3D" id="4.10.830.30">
    <property type="entry name" value="Ribosomal protein L31"/>
    <property type="match status" value="1"/>
</dbReference>
<dbReference type="HAMAP" id="MF_00502">
    <property type="entry name" value="Ribosomal_bL31_2"/>
    <property type="match status" value="1"/>
</dbReference>
<dbReference type="InterPro" id="IPR034704">
    <property type="entry name" value="Ribosomal_bL28/bL31-like_sf"/>
</dbReference>
<dbReference type="InterPro" id="IPR002150">
    <property type="entry name" value="Ribosomal_bL31"/>
</dbReference>
<dbReference type="InterPro" id="IPR027493">
    <property type="entry name" value="Ribosomal_bL31_B"/>
</dbReference>
<dbReference type="InterPro" id="IPR042105">
    <property type="entry name" value="Ribosomal_bL31_sf"/>
</dbReference>
<dbReference type="NCBIfam" id="TIGR00105">
    <property type="entry name" value="L31"/>
    <property type="match status" value="1"/>
</dbReference>
<dbReference type="NCBIfam" id="NF002462">
    <property type="entry name" value="PRK01678.1"/>
    <property type="match status" value="1"/>
</dbReference>
<dbReference type="PANTHER" id="PTHR33280">
    <property type="entry name" value="50S RIBOSOMAL PROTEIN L31, CHLOROPLASTIC"/>
    <property type="match status" value="1"/>
</dbReference>
<dbReference type="PANTHER" id="PTHR33280:SF1">
    <property type="entry name" value="LARGE RIBOSOMAL SUBUNIT PROTEIN BL31C"/>
    <property type="match status" value="1"/>
</dbReference>
<dbReference type="Pfam" id="PF01197">
    <property type="entry name" value="Ribosomal_L31"/>
    <property type="match status" value="1"/>
</dbReference>
<dbReference type="PRINTS" id="PR01249">
    <property type="entry name" value="RIBOSOMALL31"/>
</dbReference>
<dbReference type="SUPFAM" id="SSF143800">
    <property type="entry name" value="L28p-like"/>
    <property type="match status" value="1"/>
</dbReference>
<dbReference type="PROSITE" id="PS01143">
    <property type="entry name" value="RIBOSOMAL_L31"/>
    <property type="match status" value="1"/>
</dbReference>
<protein>
    <recommendedName>
        <fullName evidence="1">Large ribosomal subunit protein bL31B</fullName>
    </recommendedName>
    <alternativeName>
        <fullName evidence="2">50S ribosomal protein L31 type B</fullName>
    </alternativeName>
</protein>
<name>RL31B_STREM</name>
<accession>B4U292</accession>
<proteinExistence type="inferred from homology"/>
<keyword id="KW-0687">Ribonucleoprotein</keyword>
<keyword id="KW-0689">Ribosomal protein</keyword>
<comment type="subunit">
    <text evidence="1">Part of the 50S ribosomal subunit.</text>
</comment>
<comment type="similarity">
    <text evidence="1">Belongs to the bacterial ribosomal protein bL31 family. Type B subfamily.</text>
</comment>
<evidence type="ECO:0000255" key="1">
    <source>
        <dbReference type="HAMAP-Rule" id="MF_00502"/>
    </source>
</evidence>
<evidence type="ECO:0000305" key="2"/>
<sequence>MRKDIHPDYRPVVFLDTTTGYKFLSGSTKTSKETIEFEGETYPLVRVEISSDSHPFYTGRQKFTQADGRVDRFNKKYGLKDANAAK</sequence>
<feature type="chain" id="PRO_1000126839" description="Large ribosomal subunit protein bL31B">
    <location>
        <begin position="1"/>
        <end position="86"/>
    </location>
</feature>
<gene>
    <name evidence="1" type="primary">rpmE2</name>
    <name type="ordered locus">Sez_0746</name>
</gene>
<reference key="1">
    <citation type="journal article" date="2008" name="PLoS ONE">
        <title>Genome sequence of a lancefield group C Streptococcus zooepidemicus strain causing epidemic nephritis: new information about an old disease.</title>
        <authorList>
            <person name="Beres S.B."/>
            <person name="Sesso R."/>
            <person name="Pinto S.W.L."/>
            <person name="Hoe N.P."/>
            <person name="Porcella S.F."/>
            <person name="Deleo F.R."/>
            <person name="Musser J.M."/>
        </authorList>
    </citation>
    <scope>NUCLEOTIDE SEQUENCE [LARGE SCALE GENOMIC DNA]</scope>
    <source>
        <strain>MGCS10565</strain>
    </source>
</reference>
<organism>
    <name type="scientific">Streptococcus equi subsp. zooepidemicus (strain MGCS10565)</name>
    <dbReference type="NCBI Taxonomy" id="552526"/>
    <lineage>
        <taxon>Bacteria</taxon>
        <taxon>Bacillati</taxon>
        <taxon>Bacillota</taxon>
        <taxon>Bacilli</taxon>
        <taxon>Lactobacillales</taxon>
        <taxon>Streptococcaceae</taxon>
        <taxon>Streptococcus</taxon>
    </lineage>
</organism>